<comment type="function">
    <text evidence="1">NDH-1 shuttles electrons from NADH, via FMN and iron-sulfur (Fe-S) centers, to quinones in the respiratory chain. The immediate electron acceptor for the enzyme in this species is believed to be ubiquinone. Couples the redox reaction to proton translocation (for every two electrons transferred, four hydrogen ions are translocated across the cytoplasmic membrane), and thus conserves the redox energy in a proton gradient.</text>
</comment>
<comment type="catalytic activity">
    <reaction evidence="1">
        <text>a quinone + NADH + 5 H(+)(in) = a quinol + NAD(+) + 4 H(+)(out)</text>
        <dbReference type="Rhea" id="RHEA:57888"/>
        <dbReference type="ChEBI" id="CHEBI:15378"/>
        <dbReference type="ChEBI" id="CHEBI:24646"/>
        <dbReference type="ChEBI" id="CHEBI:57540"/>
        <dbReference type="ChEBI" id="CHEBI:57945"/>
        <dbReference type="ChEBI" id="CHEBI:132124"/>
    </reaction>
</comment>
<comment type="cofactor">
    <cofactor evidence="1">
        <name>[4Fe-4S] cluster</name>
        <dbReference type="ChEBI" id="CHEBI:49883"/>
    </cofactor>
    <text evidence="1">Binds 1 [4Fe-4S] cluster.</text>
</comment>
<comment type="subunit">
    <text evidence="1">NDH-1 is composed of 14 different subunits. Subunits NuoB, C, D, E, F, and G constitute the peripheral sector of the complex.</text>
</comment>
<comment type="subcellular location">
    <subcellularLocation>
        <location evidence="1">Cell inner membrane</location>
        <topology evidence="1">Peripheral membrane protein</topology>
        <orientation evidence="1">Cytoplasmic side</orientation>
    </subcellularLocation>
</comment>
<comment type="similarity">
    <text evidence="1">Belongs to the complex I 20 kDa subunit family.</text>
</comment>
<comment type="sequence caution" evidence="3">
    <conflict type="erroneous initiation">
        <sequence resource="EMBL-CDS" id="AAK87064"/>
    </conflict>
</comment>
<dbReference type="EC" id="7.1.1.-" evidence="1"/>
<dbReference type="EMBL" id="AE007869">
    <property type="protein sequence ID" value="AAK87064.1"/>
    <property type="status" value="ALT_INIT"/>
    <property type="molecule type" value="Genomic_DNA"/>
</dbReference>
<dbReference type="PIR" id="AE2732">
    <property type="entry name" value="AE2732"/>
</dbReference>
<dbReference type="PIR" id="G97513">
    <property type="entry name" value="G97513"/>
</dbReference>
<dbReference type="RefSeq" id="NP_354279.1">
    <property type="nucleotide sequence ID" value="NC_003062.2"/>
</dbReference>
<dbReference type="RefSeq" id="WP_003512655.1">
    <property type="nucleotide sequence ID" value="NC_003062.2"/>
</dbReference>
<dbReference type="SMR" id="A9CJB2"/>
<dbReference type="STRING" id="176299.Atu1269"/>
<dbReference type="EnsemblBacteria" id="AAK87064">
    <property type="protein sequence ID" value="AAK87064"/>
    <property type="gene ID" value="Atu1269"/>
</dbReference>
<dbReference type="KEGG" id="atu:Atu1269"/>
<dbReference type="PATRIC" id="fig|176299.10.peg.1286"/>
<dbReference type="eggNOG" id="COG0377">
    <property type="taxonomic scope" value="Bacteria"/>
</dbReference>
<dbReference type="HOGENOM" id="CLU_055737_7_0_5"/>
<dbReference type="OrthoDB" id="9786737at2"/>
<dbReference type="Proteomes" id="UP000000813">
    <property type="component" value="Chromosome circular"/>
</dbReference>
<dbReference type="GO" id="GO:0005886">
    <property type="term" value="C:plasma membrane"/>
    <property type="evidence" value="ECO:0007669"/>
    <property type="project" value="UniProtKB-SubCell"/>
</dbReference>
<dbReference type="GO" id="GO:0045271">
    <property type="term" value="C:respiratory chain complex I"/>
    <property type="evidence" value="ECO:0007669"/>
    <property type="project" value="TreeGrafter"/>
</dbReference>
<dbReference type="GO" id="GO:0051539">
    <property type="term" value="F:4 iron, 4 sulfur cluster binding"/>
    <property type="evidence" value="ECO:0007669"/>
    <property type="project" value="UniProtKB-KW"/>
</dbReference>
<dbReference type="GO" id="GO:0005506">
    <property type="term" value="F:iron ion binding"/>
    <property type="evidence" value="ECO:0007669"/>
    <property type="project" value="UniProtKB-UniRule"/>
</dbReference>
<dbReference type="GO" id="GO:0008137">
    <property type="term" value="F:NADH dehydrogenase (ubiquinone) activity"/>
    <property type="evidence" value="ECO:0007669"/>
    <property type="project" value="InterPro"/>
</dbReference>
<dbReference type="GO" id="GO:0050136">
    <property type="term" value="F:NADH:ubiquinone reductase (non-electrogenic) activity"/>
    <property type="evidence" value="ECO:0007669"/>
    <property type="project" value="UniProtKB-UniRule"/>
</dbReference>
<dbReference type="GO" id="GO:0048038">
    <property type="term" value="F:quinone binding"/>
    <property type="evidence" value="ECO:0007669"/>
    <property type="project" value="UniProtKB-KW"/>
</dbReference>
<dbReference type="GO" id="GO:0009060">
    <property type="term" value="P:aerobic respiration"/>
    <property type="evidence" value="ECO:0007669"/>
    <property type="project" value="TreeGrafter"/>
</dbReference>
<dbReference type="GO" id="GO:0015990">
    <property type="term" value="P:electron transport coupled proton transport"/>
    <property type="evidence" value="ECO:0007669"/>
    <property type="project" value="TreeGrafter"/>
</dbReference>
<dbReference type="FunFam" id="3.40.50.12280:FF:000001">
    <property type="entry name" value="NADH-quinone oxidoreductase subunit B 2"/>
    <property type="match status" value="1"/>
</dbReference>
<dbReference type="Gene3D" id="3.40.50.12280">
    <property type="match status" value="1"/>
</dbReference>
<dbReference type="HAMAP" id="MF_01356">
    <property type="entry name" value="NDH1_NuoB"/>
    <property type="match status" value="1"/>
</dbReference>
<dbReference type="InterPro" id="IPR006137">
    <property type="entry name" value="NADH_UbQ_OxRdtase-like_20kDa"/>
</dbReference>
<dbReference type="InterPro" id="IPR006138">
    <property type="entry name" value="NADH_UQ_OxRdtase_20Kd_su"/>
</dbReference>
<dbReference type="NCBIfam" id="TIGR01957">
    <property type="entry name" value="nuoB_fam"/>
    <property type="match status" value="1"/>
</dbReference>
<dbReference type="NCBIfam" id="NF005012">
    <property type="entry name" value="PRK06411.1"/>
    <property type="match status" value="1"/>
</dbReference>
<dbReference type="PANTHER" id="PTHR11995">
    <property type="entry name" value="NADH DEHYDROGENASE"/>
    <property type="match status" value="1"/>
</dbReference>
<dbReference type="PANTHER" id="PTHR11995:SF14">
    <property type="entry name" value="NADH DEHYDROGENASE [UBIQUINONE] IRON-SULFUR PROTEIN 7, MITOCHONDRIAL"/>
    <property type="match status" value="1"/>
</dbReference>
<dbReference type="Pfam" id="PF01058">
    <property type="entry name" value="Oxidored_q6"/>
    <property type="match status" value="1"/>
</dbReference>
<dbReference type="SUPFAM" id="SSF56770">
    <property type="entry name" value="HydA/Nqo6-like"/>
    <property type="match status" value="1"/>
</dbReference>
<dbReference type="PROSITE" id="PS01150">
    <property type="entry name" value="COMPLEX1_20K"/>
    <property type="match status" value="1"/>
</dbReference>
<reference key="1">
    <citation type="journal article" date="2001" name="Science">
        <title>Genome sequence of the plant pathogen and biotechnology agent Agrobacterium tumefaciens C58.</title>
        <authorList>
            <person name="Goodner B."/>
            <person name="Hinkle G."/>
            <person name="Gattung S."/>
            <person name="Miller N."/>
            <person name="Blanchard M."/>
            <person name="Qurollo B."/>
            <person name="Goldman B.S."/>
            <person name="Cao Y."/>
            <person name="Askenazi M."/>
            <person name="Halling C."/>
            <person name="Mullin L."/>
            <person name="Houmiel K."/>
            <person name="Gordon J."/>
            <person name="Vaudin M."/>
            <person name="Iartchouk O."/>
            <person name="Epp A."/>
            <person name="Liu F."/>
            <person name="Wollam C."/>
            <person name="Allinger M."/>
            <person name="Doughty D."/>
            <person name="Scott C."/>
            <person name="Lappas C."/>
            <person name="Markelz B."/>
            <person name="Flanagan C."/>
            <person name="Crowell C."/>
            <person name="Gurson J."/>
            <person name="Lomo C."/>
            <person name="Sear C."/>
            <person name="Strub G."/>
            <person name="Cielo C."/>
            <person name="Slater S."/>
        </authorList>
    </citation>
    <scope>NUCLEOTIDE SEQUENCE [LARGE SCALE GENOMIC DNA]</scope>
    <source>
        <strain>C58 / ATCC 33970</strain>
    </source>
</reference>
<reference key="2">
    <citation type="journal article" date="2001" name="Science">
        <title>The genome of the natural genetic engineer Agrobacterium tumefaciens C58.</title>
        <authorList>
            <person name="Wood D.W."/>
            <person name="Setubal J.C."/>
            <person name="Kaul R."/>
            <person name="Monks D.E."/>
            <person name="Kitajima J.P."/>
            <person name="Okura V.K."/>
            <person name="Zhou Y."/>
            <person name="Chen L."/>
            <person name="Wood G.E."/>
            <person name="Almeida N.F. Jr."/>
            <person name="Woo L."/>
            <person name="Chen Y."/>
            <person name="Paulsen I.T."/>
            <person name="Eisen J.A."/>
            <person name="Karp P.D."/>
            <person name="Bovee D. Sr."/>
            <person name="Chapman P."/>
            <person name="Clendenning J."/>
            <person name="Deatherage G."/>
            <person name="Gillet W."/>
            <person name="Grant C."/>
            <person name="Kutyavin T."/>
            <person name="Levy R."/>
            <person name="Li M.-J."/>
            <person name="McClelland E."/>
            <person name="Palmieri A."/>
            <person name="Raymond C."/>
            <person name="Rouse G."/>
            <person name="Saenphimmachak C."/>
            <person name="Wu Z."/>
            <person name="Romero P."/>
            <person name="Gordon D."/>
            <person name="Zhang S."/>
            <person name="Yoo H."/>
            <person name="Tao Y."/>
            <person name="Biddle P."/>
            <person name="Jung M."/>
            <person name="Krespan W."/>
            <person name="Perry M."/>
            <person name="Gordon-Kamm B."/>
            <person name="Liao L."/>
            <person name="Kim S."/>
            <person name="Hendrick C."/>
            <person name="Zhao Z.-Y."/>
            <person name="Dolan M."/>
            <person name="Chumley F."/>
            <person name="Tingey S.V."/>
            <person name="Tomb J.-F."/>
            <person name="Gordon M.P."/>
            <person name="Olson M.V."/>
            <person name="Nester E.W."/>
        </authorList>
    </citation>
    <scope>NUCLEOTIDE SEQUENCE [LARGE SCALE GENOMIC DNA]</scope>
    <source>
        <strain>C58 / ATCC 33970</strain>
    </source>
</reference>
<proteinExistence type="inferred from homology"/>
<accession>A9CJB2</accession>
<sequence>MGMSQNNSTLVAPQPKGIIDPATGKPVGSNDAYFTEINDELADKGFLVTSTDELITWARTGSLMWMQFGLACCAVEGLMQASGPRYDMERFGVAPRASPRQSDVMIVAGTLTNKMAPALRKVYDQMPEPRYVISMGSCANGGGYYHYSYAVVRGCDRVVPVDIYVPGCPPTAEALLYGVLLLQKKIRRTGTIER</sequence>
<gene>
    <name evidence="1" type="primary">nuoB</name>
    <name type="ordered locus">Atu1269</name>
    <name type="ORF">AGR_C_2341</name>
</gene>
<protein>
    <recommendedName>
        <fullName evidence="1">NADH-quinone oxidoreductase subunit B</fullName>
        <ecNumber evidence="1">7.1.1.-</ecNumber>
    </recommendedName>
    <alternativeName>
        <fullName evidence="1">NADH dehydrogenase I subunit B</fullName>
    </alternativeName>
    <alternativeName>
        <fullName evidence="1">NDH-1 subunit B</fullName>
    </alternativeName>
</protein>
<keyword id="KW-0004">4Fe-4S</keyword>
<keyword id="KW-0997">Cell inner membrane</keyword>
<keyword id="KW-1003">Cell membrane</keyword>
<keyword id="KW-0408">Iron</keyword>
<keyword id="KW-0411">Iron-sulfur</keyword>
<keyword id="KW-0472">Membrane</keyword>
<keyword id="KW-0479">Metal-binding</keyword>
<keyword id="KW-0520">NAD</keyword>
<keyword id="KW-0874">Quinone</keyword>
<keyword id="KW-1185">Reference proteome</keyword>
<keyword id="KW-1278">Translocase</keyword>
<keyword id="KW-0813">Transport</keyword>
<keyword id="KW-0830">Ubiquinone</keyword>
<feature type="chain" id="PRO_0000376114" description="NADH-quinone oxidoreductase subunit B">
    <location>
        <begin position="1"/>
        <end position="194"/>
    </location>
</feature>
<feature type="region of interest" description="Disordered" evidence="2">
    <location>
        <begin position="1"/>
        <end position="22"/>
    </location>
</feature>
<feature type="compositionally biased region" description="Polar residues" evidence="2">
    <location>
        <begin position="1"/>
        <end position="11"/>
    </location>
</feature>
<feature type="binding site" evidence="1">
    <location>
        <position position="72"/>
    </location>
    <ligand>
        <name>[4Fe-4S] cluster</name>
        <dbReference type="ChEBI" id="CHEBI:49883"/>
    </ligand>
</feature>
<feature type="binding site" evidence="1">
    <location>
        <position position="73"/>
    </location>
    <ligand>
        <name>[4Fe-4S] cluster</name>
        <dbReference type="ChEBI" id="CHEBI:49883"/>
    </ligand>
</feature>
<feature type="binding site" evidence="1">
    <location>
        <position position="138"/>
    </location>
    <ligand>
        <name>[4Fe-4S] cluster</name>
        <dbReference type="ChEBI" id="CHEBI:49883"/>
    </ligand>
</feature>
<feature type="binding site" evidence="1">
    <location>
        <position position="168"/>
    </location>
    <ligand>
        <name>[4Fe-4S] cluster</name>
        <dbReference type="ChEBI" id="CHEBI:49883"/>
    </ligand>
</feature>
<evidence type="ECO:0000255" key="1">
    <source>
        <dbReference type="HAMAP-Rule" id="MF_01356"/>
    </source>
</evidence>
<evidence type="ECO:0000256" key="2">
    <source>
        <dbReference type="SAM" id="MobiDB-lite"/>
    </source>
</evidence>
<evidence type="ECO:0000305" key="3"/>
<name>NUOB_AGRFC</name>
<organism>
    <name type="scientific">Agrobacterium fabrum (strain C58 / ATCC 33970)</name>
    <name type="common">Agrobacterium tumefaciens (strain C58)</name>
    <dbReference type="NCBI Taxonomy" id="176299"/>
    <lineage>
        <taxon>Bacteria</taxon>
        <taxon>Pseudomonadati</taxon>
        <taxon>Pseudomonadota</taxon>
        <taxon>Alphaproteobacteria</taxon>
        <taxon>Hyphomicrobiales</taxon>
        <taxon>Rhizobiaceae</taxon>
        <taxon>Rhizobium/Agrobacterium group</taxon>
        <taxon>Agrobacterium</taxon>
        <taxon>Agrobacterium tumefaciens complex</taxon>
    </lineage>
</organism>